<gene>
    <name type="primary">ssb</name>
    <name type="ordered locus">Atu1512</name>
    <name type="ORF">AGR_C_2789</name>
</gene>
<feature type="chain" id="PRO_0000095994" description="Single-stranded DNA-binding protein">
    <location>
        <begin position="1"/>
        <end position="173"/>
    </location>
</feature>
<feature type="domain" description="SSB" evidence="1">
    <location>
        <begin position="5"/>
        <end position="111"/>
    </location>
</feature>
<feature type="region of interest" description="Disordered" evidence="2">
    <location>
        <begin position="114"/>
        <end position="173"/>
    </location>
</feature>
<feature type="short sequence motif" description="Important for interaction with partner proteins" evidence="1">
    <location>
        <begin position="168"/>
        <end position="173"/>
    </location>
</feature>
<feature type="compositionally biased region" description="Gly residues" evidence="2">
    <location>
        <begin position="119"/>
        <end position="142"/>
    </location>
</feature>
<proteinExistence type="inferred from homology"/>
<keyword id="KW-0227">DNA damage</keyword>
<keyword id="KW-0233">DNA recombination</keyword>
<keyword id="KW-0234">DNA repair</keyword>
<keyword id="KW-0235">DNA replication</keyword>
<keyword id="KW-0238">DNA-binding</keyword>
<keyword id="KW-1185">Reference proteome</keyword>
<sequence length="173" mass="18582">MAGSVNKVILIGNVGADPEIRRTQDGRPIANLRIATSETWRDRNSGERKEKTEWHTVVVFNEGLCKVVEQYVKKGAKLYIEGQLQTRKWQDQTGNDRYSTEIVLQGFNSTLTMLDGRGEGGGGRSGGGDFGGGNDYGSGGGYDQQSSPRGGSSRGGGQPSGGFSNDMDDDIPF</sequence>
<dbReference type="EMBL" id="AE007869">
    <property type="protein sequence ID" value="AAK87303.2"/>
    <property type="molecule type" value="Genomic_DNA"/>
</dbReference>
<dbReference type="PIR" id="AG2762">
    <property type="entry name" value="AG2762"/>
</dbReference>
<dbReference type="PIR" id="F97543">
    <property type="entry name" value="F97543"/>
</dbReference>
<dbReference type="RefSeq" id="NP_354518.2">
    <property type="nucleotide sequence ID" value="NC_003062.2"/>
</dbReference>
<dbReference type="SMR" id="Q8UF87"/>
<dbReference type="STRING" id="176299.Atu1512"/>
<dbReference type="EnsemblBacteria" id="AAK87303">
    <property type="protein sequence ID" value="AAK87303"/>
    <property type="gene ID" value="Atu1512"/>
</dbReference>
<dbReference type="KEGG" id="atu:Atu1512"/>
<dbReference type="PATRIC" id="fig|176299.10.peg.1538"/>
<dbReference type="eggNOG" id="COG0629">
    <property type="taxonomic scope" value="Bacteria"/>
</dbReference>
<dbReference type="HOGENOM" id="CLU_078758_0_1_5"/>
<dbReference type="OrthoDB" id="9809878at2"/>
<dbReference type="PhylomeDB" id="Q8UF87"/>
<dbReference type="BioCyc" id="AGRO:ATU1512-MONOMER"/>
<dbReference type="Proteomes" id="UP000000813">
    <property type="component" value="Chromosome circular"/>
</dbReference>
<dbReference type="GO" id="GO:0009295">
    <property type="term" value="C:nucleoid"/>
    <property type="evidence" value="ECO:0007669"/>
    <property type="project" value="TreeGrafter"/>
</dbReference>
<dbReference type="GO" id="GO:0003697">
    <property type="term" value="F:single-stranded DNA binding"/>
    <property type="evidence" value="ECO:0007669"/>
    <property type="project" value="UniProtKB-UniRule"/>
</dbReference>
<dbReference type="GO" id="GO:0006310">
    <property type="term" value="P:DNA recombination"/>
    <property type="evidence" value="ECO:0007669"/>
    <property type="project" value="UniProtKB-UniRule"/>
</dbReference>
<dbReference type="GO" id="GO:0006281">
    <property type="term" value="P:DNA repair"/>
    <property type="evidence" value="ECO:0007669"/>
    <property type="project" value="UniProtKB-UniRule"/>
</dbReference>
<dbReference type="GO" id="GO:0006260">
    <property type="term" value="P:DNA replication"/>
    <property type="evidence" value="ECO:0007669"/>
    <property type="project" value="UniProtKB-UniRule"/>
</dbReference>
<dbReference type="CDD" id="cd04496">
    <property type="entry name" value="SSB_OBF"/>
    <property type="match status" value="1"/>
</dbReference>
<dbReference type="Gene3D" id="2.40.50.140">
    <property type="entry name" value="Nucleic acid-binding proteins"/>
    <property type="match status" value="1"/>
</dbReference>
<dbReference type="HAMAP" id="MF_00984">
    <property type="entry name" value="SSB"/>
    <property type="match status" value="1"/>
</dbReference>
<dbReference type="InterPro" id="IPR012340">
    <property type="entry name" value="NA-bd_OB-fold"/>
</dbReference>
<dbReference type="InterPro" id="IPR000424">
    <property type="entry name" value="Primosome_PriB/ssb"/>
</dbReference>
<dbReference type="InterPro" id="IPR011344">
    <property type="entry name" value="ssDNA-bd"/>
</dbReference>
<dbReference type="NCBIfam" id="NF004972">
    <property type="entry name" value="PRK06341.1"/>
    <property type="match status" value="1"/>
</dbReference>
<dbReference type="NCBIfam" id="TIGR00621">
    <property type="entry name" value="ssb"/>
    <property type="match status" value="1"/>
</dbReference>
<dbReference type="PANTHER" id="PTHR10302">
    <property type="entry name" value="SINGLE-STRANDED DNA-BINDING PROTEIN"/>
    <property type="match status" value="1"/>
</dbReference>
<dbReference type="PANTHER" id="PTHR10302:SF27">
    <property type="entry name" value="SINGLE-STRANDED DNA-BINDING PROTEIN"/>
    <property type="match status" value="1"/>
</dbReference>
<dbReference type="Pfam" id="PF00436">
    <property type="entry name" value="SSB"/>
    <property type="match status" value="1"/>
</dbReference>
<dbReference type="SUPFAM" id="SSF50249">
    <property type="entry name" value="Nucleic acid-binding proteins"/>
    <property type="match status" value="1"/>
</dbReference>
<dbReference type="PROSITE" id="PS50935">
    <property type="entry name" value="SSB"/>
    <property type="match status" value="1"/>
</dbReference>
<name>SSB_AGRFC</name>
<reference key="1">
    <citation type="journal article" date="2001" name="Science">
        <title>The genome of the natural genetic engineer Agrobacterium tumefaciens C58.</title>
        <authorList>
            <person name="Wood D.W."/>
            <person name="Setubal J.C."/>
            <person name="Kaul R."/>
            <person name="Monks D.E."/>
            <person name="Kitajima J.P."/>
            <person name="Okura V.K."/>
            <person name="Zhou Y."/>
            <person name="Chen L."/>
            <person name="Wood G.E."/>
            <person name="Almeida N.F. Jr."/>
            <person name="Woo L."/>
            <person name="Chen Y."/>
            <person name="Paulsen I.T."/>
            <person name="Eisen J.A."/>
            <person name="Karp P.D."/>
            <person name="Bovee D. Sr."/>
            <person name="Chapman P."/>
            <person name="Clendenning J."/>
            <person name="Deatherage G."/>
            <person name="Gillet W."/>
            <person name="Grant C."/>
            <person name="Kutyavin T."/>
            <person name="Levy R."/>
            <person name="Li M.-J."/>
            <person name="McClelland E."/>
            <person name="Palmieri A."/>
            <person name="Raymond C."/>
            <person name="Rouse G."/>
            <person name="Saenphimmachak C."/>
            <person name="Wu Z."/>
            <person name="Romero P."/>
            <person name="Gordon D."/>
            <person name="Zhang S."/>
            <person name="Yoo H."/>
            <person name="Tao Y."/>
            <person name="Biddle P."/>
            <person name="Jung M."/>
            <person name="Krespan W."/>
            <person name="Perry M."/>
            <person name="Gordon-Kamm B."/>
            <person name="Liao L."/>
            <person name="Kim S."/>
            <person name="Hendrick C."/>
            <person name="Zhao Z.-Y."/>
            <person name="Dolan M."/>
            <person name="Chumley F."/>
            <person name="Tingey S.V."/>
            <person name="Tomb J.-F."/>
            <person name="Gordon M.P."/>
            <person name="Olson M.V."/>
            <person name="Nester E.W."/>
        </authorList>
    </citation>
    <scope>NUCLEOTIDE SEQUENCE [LARGE SCALE GENOMIC DNA]</scope>
    <source>
        <strain>C58 / ATCC 33970</strain>
    </source>
</reference>
<reference key="2">
    <citation type="journal article" date="2001" name="Science">
        <title>Genome sequence of the plant pathogen and biotechnology agent Agrobacterium tumefaciens C58.</title>
        <authorList>
            <person name="Goodner B."/>
            <person name="Hinkle G."/>
            <person name="Gattung S."/>
            <person name="Miller N."/>
            <person name="Blanchard M."/>
            <person name="Qurollo B."/>
            <person name="Goldman B.S."/>
            <person name="Cao Y."/>
            <person name="Askenazi M."/>
            <person name="Halling C."/>
            <person name="Mullin L."/>
            <person name="Houmiel K."/>
            <person name="Gordon J."/>
            <person name="Vaudin M."/>
            <person name="Iartchouk O."/>
            <person name="Epp A."/>
            <person name="Liu F."/>
            <person name="Wollam C."/>
            <person name="Allinger M."/>
            <person name="Doughty D."/>
            <person name="Scott C."/>
            <person name="Lappas C."/>
            <person name="Markelz B."/>
            <person name="Flanagan C."/>
            <person name="Crowell C."/>
            <person name="Gurson J."/>
            <person name="Lomo C."/>
            <person name="Sear C."/>
            <person name="Strub G."/>
            <person name="Cielo C."/>
            <person name="Slater S."/>
        </authorList>
    </citation>
    <scope>NUCLEOTIDE SEQUENCE [LARGE SCALE GENOMIC DNA]</scope>
    <source>
        <strain>C58 / ATCC 33970</strain>
    </source>
</reference>
<accession>Q8UF87</accession>
<organism>
    <name type="scientific">Agrobacterium fabrum (strain C58 / ATCC 33970)</name>
    <name type="common">Agrobacterium tumefaciens (strain C58)</name>
    <dbReference type="NCBI Taxonomy" id="176299"/>
    <lineage>
        <taxon>Bacteria</taxon>
        <taxon>Pseudomonadati</taxon>
        <taxon>Pseudomonadota</taxon>
        <taxon>Alphaproteobacteria</taxon>
        <taxon>Hyphomicrobiales</taxon>
        <taxon>Rhizobiaceae</taxon>
        <taxon>Rhizobium/Agrobacterium group</taxon>
        <taxon>Agrobacterium</taxon>
        <taxon>Agrobacterium tumefaciens complex</taxon>
    </lineage>
</organism>
<comment type="function">
    <text evidence="1">Plays an important role in DNA replication, recombination and repair. Binds to ssDNA and to an array of partner proteins to recruit them to their sites of action during DNA metabolism.</text>
</comment>
<comment type="subunit">
    <text evidence="1">Homotetramer.</text>
</comment>
<protein>
    <recommendedName>
        <fullName evidence="1">Single-stranded DNA-binding protein</fullName>
        <shortName evidence="1">SSB</shortName>
    </recommendedName>
</protein>
<evidence type="ECO:0000255" key="1">
    <source>
        <dbReference type="HAMAP-Rule" id="MF_00984"/>
    </source>
</evidence>
<evidence type="ECO:0000256" key="2">
    <source>
        <dbReference type="SAM" id="MobiDB-lite"/>
    </source>
</evidence>